<feature type="chain" id="PRO_0000366356" description="Eukaryotic translation initiation factor 3 subunit A">
    <location>
        <begin position="1"/>
        <end position="930"/>
    </location>
</feature>
<feature type="domain" description="PCI" evidence="2">
    <location>
        <begin position="355"/>
        <end position="533"/>
    </location>
</feature>
<feature type="region of interest" description="Disordered" evidence="3">
    <location>
        <begin position="130"/>
        <end position="154"/>
    </location>
</feature>
<feature type="coiled-coil region" evidence="1">
    <location>
        <begin position="72"/>
        <end position="125"/>
    </location>
</feature>
<feature type="coiled-coil region" evidence="1">
    <location>
        <begin position="620"/>
        <end position="902"/>
    </location>
</feature>
<feature type="compositionally biased region" description="Gly residues" evidence="3">
    <location>
        <begin position="136"/>
        <end position="150"/>
    </location>
</feature>
<sequence>MAPPHKNHNFRPENVLKRAEDLIAVGQKEAALDTLYELIISKRIRYLQVQDLEPIASLLIELAVELRKGKLAKDALHQYKKNIQLSENGLESVQTIVRKFIDLAEKKLDAAQTKADIKIDEEENAAAAAAATSSAGAGGAGGDAGGAGAGGDDDLETAQTPESILLSAVSNTDSADRTERELVTPWLRFLWEAFRAVLDILRNNSKLEITYSAIVNQAFKFCLNFNRKAEFRRLCELLRTHMQSVTTQTTTKTSGHNAIDLSDAETVQRYLDQRFAQLNIAVKLELWQESFRSVDDVHSLITASKKAPKPNMMANYYENLARIFAVSDNTLYHAAAWNKFFNLYSQSPLATDEELKRYASVLVLSTLSIPQRVVQDVDEHKSKNSKLSSLLNLTHVPTREGLIKSILSRSILKYVDEPIQQLFELLEGGDFHPLSIKQEISQLFQIIESDKEFKKYIPTLTEVILIRIFQQVSQVYDAVKLDFLISLGIFPDLEYSLSELQVEDLIVNAVKDDLVSLTIDHESGVVSFKSNPFDEIDQEFANAGTTTTNTITTTTTIGTSRLQISPAELVRTQISKLAATLSESIYLIDPNYEARQQQAKQQALQRCIKDMVNEQQRIADRSKILKDRKVAAEKRKREEEERQARLRQEKLAMEQKLEQERLIAEQERKKLEKLEKERELIKENEKRKIAEEINAKGIIKIDLNNLKELDTTKLQLMQIEQLNKDKKELETKLQATAKKADHLERAYRRYELNLLEADLEIQLDLEKKDYEFLKQSKINKAKKDHDNAIELKKRLQRILPDYSKFKSEIDAKNEVKLKQLQKEAQIKFEKAKQERIESVKKHRIEELKIRKERERKAAAEEAARQAKAAEMAKLKEELRIQKEKDEALARKRAELEAAAAAAAAPSSSPPPKKTMTFAERMRLKREGKLP</sequence>
<comment type="function">
    <text evidence="1">RNA-binding component of the eukaryotic translation initiation factor 3 (eIF-3) complex, which is involved in protein synthesis of a specialized repertoire of mRNAs and, together with other initiation factors, stimulates binding of mRNA and methionyl-tRNAi to the 40S ribosome. The eIF-3 complex specifically targets and initiates translation of a subset of mRNAs involved in cell proliferation.</text>
</comment>
<comment type="subunit">
    <text evidence="1">Component of the eukaryotic translation initiation factor 3 (eIF-3) complex.</text>
</comment>
<comment type="subcellular location">
    <subcellularLocation>
        <location evidence="1">Cytoplasm</location>
    </subcellularLocation>
</comment>
<comment type="similarity">
    <text evidence="1">Belongs to the eIF-3 subunit A family.</text>
</comment>
<dbReference type="EMBL" id="CP017623">
    <property type="protein sequence ID" value="AOW26892.1"/>
    <property type="molecule type" value="Genomic_DNA"/>
</dbReference>
<dbReference type="RefSeq" id="XP_711563.1">
    <property type="nucleotide sequence ID" value="XM_706471.2"/>
</dbReference>
<dbReference type="SMR" id="Q59PL9"/>
<dbReference type="BioGRID" id="1229849">
    <property type="interactions" value="3"/>
</dbReference>
<dbReference type="FunCoup" id="Q59PL9">
    <property type="interactions" value="1359"/>
</dbReference>
<dbReference type="STRING" id="237561.Q59PL9"/>
<dbReference type="EnsemblFungi" id="C1_12770W_A-T">
    <property type="protein sequence ID" value="C1_12770W_A-T-p1"/>
    <property type="gene ID" value="C1_12770W_A"/>
</dbReference>
<dbReference type="GeneID" id="3646816"/>
<dbReference type="KEGG" id="cal:CAALFM_C112770WA"/>
<dbReference type="CGD" id="CAL0000181001">
    <property type="gene designation" value="RPG1A"/>
</dbReference>
<dbReference type="VEuPathDB" id="FungiDB:C1_12770W_A"/>
<dbReference type="eggNOG" id="KOG2072">
    <property type="taxonomic scope" value="Eukaryota"/>
</dbReference>
<dbReference type="HOGENOM" id="CLU_002096_2_1_1"/>
<dbReference type="InParanoid" id="Q59PL9"/>
<dbReference type="OrthoDB" id="18884at2759"/>
<dbReference type="PRO" id="PR:Q59PL9"/>
<dbReference type="Proteomes" id="UP000000559">
    <property type="component" value="Chromosome 1"/>
</dbReference>
<dbReference type="GO" id="GO:0010494">
    <property type="term" value="C:cytoplasmic stress granule"/>
    <property type="evidence" value="ECO:0007669"/>
    <property type="project" value="EnsemblFungi"/>
</dbReference>
<dbReference type="GO" id="GO:0016282">
    <property type="term" value="C:eukaryotic 43S preinitiation complex"/>
    <property type="evidence" value="ECO:0007669"/>
    <property type="project" value="UniProtKB-UniRule"/>
</dbReference>
<dbReference type="GO" id="GO:0033290">
    <property type="term" value="C:eukaryotic 48S preinitiation complex"/>
    <property type="evidence" value="ECO:0007669"/>
    <property type="project" value="UniProtKB-UniRule"/>
</dbReference>
<dbReference type="GO" id="GO:0071540">
    <property type="term" value="C:eukaryotic translation initiation factor 3 complex, eIF3e"/>
    <property type="evidence" value="ECO:0000318"/>
    <property type="project" value="GO_Central"/>
</dbReference>
<dbReference type="GO" id="GO:0071541">
    <property type="term" value="C:eukaryotic translation initiation factor 3 complex, eIF3m"/>
    <property type="evidence" value="ECO:0000318"/>
    <property type="project" value="GO_Central"/>
</dbReference>
<dbReference type="GO" id="GO:0043614">
    <property type="term" value="C:multi-eIF complex"/>
    <property type="evidence" value="ECO:0000318"/>
    <property type="project" value="GO_Central"/>
</dbReference>
<dbReference type="GO" id="GO:0003729">
    <property type="term" value="F:mRNA binding"/>
    <property type="evidence" value="ECO:0000318"/>
    <property type="project" value="GO_Central"/>
</dbReference>
<dbReference type="GO" id="GO:0003743">
    <property type="term" value="F:translation initiation factor activity"/>
    <property type="evidence" value="ECO:0007669"/>
    <property type="project" value="UniProtKB-UniRule"/>
</dbReference>
<dbReference type="GO" id="GO:0001732">
    <property type="term" value="P:formation of cytoplasmic translation initiation complex"/>
    <property type="evidence" value="ECO:0000318"/>
    <property type="project" value="GO_Central"/>
</dbReference>
<dbReference type="GO" id="GO:0002188">
    <property type="term" value="P:translation reinitiation"/>
    <property type="evidence" value="ECO:0000318"/>
    <property type="project" value="GO_Central"/>
</dbReference>
<dbReference type="FunFam" id="4.10.860.10:FF:000001">
    <property type="entry name" value="Eukaryotic translation initiation factor 3 subunit A"/>
    <property type="match status" value="1"/>
</dbReference>
<dbReference type="Gene3D" id="1.25.40.860">
    <property type="match status" value="1"/>
</dbReference>
<dbReference type="Gene3D" id="4.10.860.10">
    <property type="entry name" value="UVR domain"/>
    <property type="match status" value="1"/>
</dbReference>
<dbReference type="HAMAP" id="MF_03000">
    <property type="entry name" value="eIF3a"/>
    <property type="match status" value="1"/>
</dbReference>
<dbReference type="InterPro" id="IPR027512">
    <property type="entry name" value="EIF3A"/>
</dbReference>
<dbReference type="InterPro" id="IPR054711">
    <property type="entry name" value="eIF3a_PCI_TPR-like"/>
</dbReference>
<dbReference type="InterPro" id="IPR000717">
    <property type="entry name" value="PCI_dom"/>
</dbReference>
<dbReference type="PANTHER" id="PTHR14005:SF0">
    <property type="entry name" value="EUKARYOTIC TRANSLATION INITIATION FACTOR 3 SUBUNIT A"/>
    <property type="match status" value="1"/>
</dbReference>
<dbReference type="PANTHER" id="PTHR14005">
    <property type="entry name" value="EUKARYOTIC TRANSLATION INITIATION FACTOR 3, THETA SUBUNIT"/>
    <property type="match status" value="1"/>
</dbReference>
<dbReference type="Pfam" id="PF22591">
    <property type="entry name" value="eIF3a_PCI_TPR-like"/>
    <property type="match status" value="2"/>
</dbReference>
<dbReference type="Pfam" id="PF01399">
    <property type="entry name" value="PCI"/>
    <property type="match status" value="1"/>
</dbReference>
<dbReference type="SMART" id="SM00088">
    <property type="entry name" value="PINT"/>
    <property type="match status" value="1"/>
</dbReference>
<dbReference type="PROSITE" id="PS50250">
    <property type="entry name" value="PCI"/>
    <property type="match status" value="1"/>
</dbReference>
<organism>
    <name type="scientific">Candida albicans (strain SC5314 / ATCC MYA-2876)</name>
    <name type="common">Yeast</name>
    <dbReference type="NCBI Taxonomy" id="237561"/>
    <lineage>
        <taxon>Eukaryota</taxon>
        <taxon>Fungi</taxon>
        <taxon>Dikarya</taxon>
        <taxon>Ascomycota</taxon>
        <taxon>Saccharomycotina</taxon>
        <taxon>Pichiomycetes</taxon>
        <taxon>Debaryomycetaceae</taxon>
        <taxon>Candida/Lodderomyces clade</taxon>
        <taxon>Candida</taxon>
    </lineage>
</organism>
<gene>
    <name evidence="1" type="primary">RPG1A</name>
    <name type="synonym">TIF32</name>
    <name type="ordered locus">CAALFM_C112770WA</name>
    <name type="ORF">CaO19.13701</name>
    <name type="ORF">CaO19.6345</name>
</gene>
<protein>
    <recommendedName>
        <fullName evidence="1">Eukaryotic translation initiation factor 3 subunit A</fullName>
        <shortName evidence="1">eIF3a</shortName>
    </recommendedName>
    <alternativeName>
        <fullName evidence="1">Eukaryotic translation initiation factor 3 110 kDa subunit homolog</fullName>
        <shortName evidence="1">eIF3 p110</shortName>
    </alternativeName>
    <alternativeName>
        <fullName evidence="1">Translation initiation factor eIF3, p110 subunit homolog</fullName>
    </alternativeName>
</protein>
<reference key="1">
    <citation type="journal article" date="2004" name="Proc. Natl. Acad. Sci. U.S.A.">
        <title>The diploid genome sequence of Candida albicans.</title>
        <authorList>
            <person name="Jones T."/>
            <person name="Federspiel N.A."/>
            <person name="Chibana H."/>
            <person name="Dungan J."/>
            <person name="Kalman S."/>
            <person name="Magee B.B."/>
            <person name="Newport G."/>
            <person name="Thorstenson Y.R."/>
            <person name="Agabian N."/>
            <person name="Magee P.T."/>
            <person name="Davis R.W."/>
            <person name="Scherer S."/>
        </authorList>
    </citation>
    <scope>NUCLEOTIDE SEQUENCE [LARGE SCALE GENOMIC DNA]</scope>
    <source>
        <strain>SC5314 / ATCC MYA-2876</strain>
    </source>
</reference>
<reference key="2">
    <citation type="journal article" date="2007" name="Genome Biol.">
        <title>Assembly of the Candida albicans genome into sixteen supercontigs aligned on the eight chromosomes.</title>
        <authorList>
            <person name="van het Hoog M."/>
            <person name="Rast T.J."/>
            <person name="Martchenko M."/>
            <person name="Grindle S."/>
            <person name="Dignard D."/>
            <person name="Hogues H."/>
            <person name="Cuomo C."/>
            <person name="Berriman M."/>
            <person name="Scherer S."/>
            <person name="Magee B.B."/>
            <person name="Whiteway M."/>
            <person name="Chibana H."/>
            <person name="Nantel A."/>
            <person name="Magee P.T."/>
        </authorList>
    </citation>
    <scope>GENOME REANNOTATION</scope>
    <source>
        <strain>SC5314 / ATCC MYA-2876</strain>
    </source>
</reference>
<reference key="3">
    <citation type="journal article" date="2013" name="Genome Biol.">
        <title>Assembly of a phased diploid Candida albicans genome facilitates allele-specific measurements and provides a simple model for repeat and indel structure.</title>
        <authorList>
            <person name="Muzzey D."/>
            <person name="Schwartz K."/>
            <person name="Weissman J.S."/>
            <person name="Sherlock G."/>
        </authorList>
    </citation>
    <scope>NUCLEOTIDE SEQUENCE [LARGE SCALE GENOMIC DNA]</scope>
    <scope>GENOME REANNOTATION</scope>
    <source>
        <strain>SC5314 / ATCC MYA-2876</strain>
    </source>
</reference>
<evidence type="ECO:0000255" key="1">
    <source>
        <dbReference type="HAMAP-Rule" id="MF_03000"/>
    </source>
</evidence>
<evidence type="ECO:0000255" key="2">
    <source>
        <dbReference type="PROSITE-ProRule" id="PRU01185"/>
    </source>
</evidence>
<evidence type="ECO:0000256" key="3">
    <source>
        <dbReference type="SAM" id="MobiDB-lite"/>
    </source>
</evidence>
<accession>Q59PL9</accession>
<accession>A0A1D8PFI6</accession>
<accession>Q59PE8</accession>
<keyword id="KW-0175">Coiled coil</keyword>
<keyword id="KW-0963">Cytoplasm</keyword>
<keyword id="KW-0396">Initiation factor</keyword>
<keyword id="KW-0648">Protein biosynthesis</keyword>
<keyword id="KW-1185">Reference proteome</keyword>
<keyword id="KW-0694">RNA-binding</keyword>
<name>EIF3A_CANAL</name>
<proteinExistence type="inferred from homology"/>